<sequence>MVHAETFSRPLSRNEVVGLIFRLTIFGAVTYFTIKWMVDAIDPTRKQKVEAQKQAEKLMKQIGVKNVKLSEYEMSIAAHLVDPLNMHVTWSDIAGLDDVITDLKDTVILPIKKKHLFENSRLLQPPKGVLLYGPPGCGKTLIAKATAKEAGCRFINLQPSTLTDKWYGESQKLAAAVFSLAIKLQPSIIFIDEIDSFLRNRSSSDHEATAMMKAQFMSLWDGLDTDHSCQVIVMGATNRPQDLDSAIMRRMPTRFHINQPALKQREAILKLILKNENVDRHVDLLEVAQETDGFSGSDLKEMCRDAALLCVREYVNSTSEESHDEDEIRPVQQQDLHRAIEKMKKSKDAAFQNVLTHVCLD</sequence>
<evidence type="ECO:0000250" key="1">
    <source>
        <dbReference type="UniProtKB" id="P28737"/>
    </source>
</evidence>
<evidence type="ECO:0000250" key="2">
    <source>
        <dbReference type="UniProtKB" id="Q8NBU5"/>
    </source>
</evidence>
<evidence type="ECO:0000250" key="3">
    <source>
        <dbReference type="UniProtKB" id="Q9D5T0"/>
    </source>
</evidence>
<evidence type="ECO:0000255" key="4"/>
<evidence type="ECO:0000305" key="5"/>
<proteinExistence type="evidence at transcript level"/>
<reference key="1">
    <citation type="journal article" date="2009" name="Genome Biol.">
        <title>A whole-genome assembly of the domestic cow, Bos taurus.</title>
        <authorList>
            <person name="Zimin A.V."/>
            <person name="Delcher A.L."/>
            <person name="Florea L."/>
            <person name="Kelley D.R."/>
            <person name="Schatz M.C."/>
            <person name="Puiu D."/>
            <person name="Hanrahan F."/>
            <person name="Pertea G."/>
            <person name="Van Tassell C.P."/>
            <person name="Sonstegard T.S."/>
            <person name="Marcais G."/>
            <person name="Roberts M."/>
            <person name="Subramanian P."/>
            <person name="Yorke J.A."/>
            <person name="Salzberg S.L."/>
        </authorList>
    </citation>
    <scope>NUCLEOTIDE SEQUENCE [LARGE SCALE GENOMIC DNA]</scope>
    <source>
        <strain>Hereford</strain>
    </source>
</reference>
<reference key="2">
    <citation type="submission" date="2007-07" db="EMBL/GenBank/DDBJ databases">
        <authorList>
            <consortium name="NIH - Mammalian Gene Collection (MGC) project"/>
        </authorList>
    </citation>
    <scope>NUCLEOTIDE SEQUENCE [LARGE SCALE MRNA]</scope>
</reference>
<feature type="chain" id="PRO_0000416486" description="Outer mitochondrial transmembrane helix translocase" evidence="4">
    <location>
        <begin position="1"/>
        <end position="361"/>
    </location>
</feature>
<feature type="topological domain" description="Mitochondrial intermembrane" evidence="5">
    <location>
        <begin position="1"/>
        <end position="15"/>
    </location>
</feature>
<feature type="transmembrane region" description="Helical" evidence="4">
    <location>
        <begin position="16"/>
        <end position="32"/>
    </location>
</feature>
<feature type="topological domain" description="Cytoplasmic" evidence="5">
    <location>
        <begin position="33"/>
        <end position="361"/>
    </location>
</feature>
<feature type="binding site">
    <location>
        <begin position="133"/>
        <end position="140"/>
    </location>
    <ligand>
        <name>ATP</name>
        <dbReference type="ChEBI" id="CHEBI:30616"/>
    </ligand>
</feature>
<feature type="modified residue" description="Phosphoserine" evidence="3">
    <location>
        <position position="322"/>
    </location>
</feature>
<gene>
    <name evidence="2" type="primary">ATAD1</name>
</gene>
<keyword id="KW-0067">ATP-binding</keyword>
<keyword id="KW-1003">Cell membrane</keyword>
<keyword id="KW-0472">Membrane</keyword>
<keyword id="KW-0496">Mitochondrion</keyword>
<keyword id="KW-1000">Mitochondrion outer membrane</keyword>
<keyword id="KW-0547">Nucleotide-binding</keyword>
<keyword id="KW-0576">Peroxisome</keyword>
<keyword id="KW-0597">Phosphoprotein</keyword>
<keyword id="KW-0628">Postsynaptic cell membrane</keyword>
<keyword id="KW-1185">Reference proteome</keyword>
<keyword id="KW-0770">Synapse</keyword>
<keyword id="KW-1278">Translocase</keyword>
<keyword id="KW-0812">Transmembrane</keyword>
<keyword id="KW-1133">Transmembrane helix</keyword>
<dbReference type="EC" id="7.4.2.-" evidence="1 2"/>
<dbReference type="EMBL" id="DAAA02058710">
    <property type="status" value="NOT_ANNOTATED_CDS"/>
    <property type="molecule type" value="Genomic_DNA"/>
</dbReference>
<dbReference type="EMBL" id="BC151346">
    <property type="protein sequence ID" value="AAI51347.1"/>
    <property type="status" value="ALT_INIT"/>
    <property type="molecule type" value="mRNA"/>
</dbReference>
<dbReference type="RefSeq" id="NP_001192510.1">
    <property type="nucleotide sequence ID" value="NM_001205581.1"/>
</dbReference>
<dbReference type="RefSeq" id="XP_024841301.1">
    <property type="nucleotide sequence ID" value="XM_024985533.2"/>
</dbReference>
<dbReference type="SMR" id="F6QV99"/>
<dbReference type="FunCoup" id="F6QV99">
    <property type="interactions" value="3149"/>
</dbReference>
<dbReference type="STRING" id="9913.ENSBTAP00000001066"/>
<dbReference type="PaxDb" id="9913-ENSBTAP00000001066"/>
<dbReference type="Ensembl" id="ENSBTAT00000001066.5">
    <property type="protein sequence ID" value="ENSBTAP00000001066.5"/>
    <property type="gene ID" value="ENSBTAG00000000806.7"/>
</dbReference>
<dbReference type="GeneID" id="506045"/>
<dbReference type="KEGG" id="bta:506045"/>
<dbReference type="CTD" id="84896"/>
<dbReference type="VEuPathDB" id="HostDB:ENSBTAG00000000806"/>
<dbReference type="VGNC" id="VGNC:26232">
    <property type="gene designation" value="ATAD1"/>
</dbReference>
<dbReference type="eggNOG" id="KOG0737">
    <property type="taxonomic scope" value="Eukaryota"/>
</dbReference>
<dbReference type="GeneTree" id="ENSGT00550000074823"/>
<dbReference type="HOGENOM" id="CLU_000688_21_14_1"/>
<dbReference type="InParanoid" id="F6QV99"/>
<dbReference type="OMA" id="CRNAAMR"/>
<dbReference type="OrthoDB" id="10254455at2759"/>
<dbReference type="Reactome" id="R-BTA-9603798">
    <property type="pathway name" value="Class I peroxisomal membrane protein import"/>
</dbReference>
<dbReference type="Proteomes" id="UP000009136">
    <property type="component" value="Chromosome 26"/>
</dbReference>
<dbReference type="Bgee" id="ENSBTAG00000000806">
    <property type="expression patterns" value="Expressed in semen and 105 other cell types or tissues"/>
</dbReference>
<dbReference type="GO" id="GO:0005741">
    <property type="term" value="C:mitochondrial outer membrane"/>
    <property type="evidence" value="ECO:0000250"/>
    <property type="project" value="UniProtKB"/>
</dbReference>
<dbReference type="GO" id="GO:0005778">
    <property type="term" value="C:peroxisomal membrane"/>
    <property type="evidence" value="ECO:0000250"/>
    <property type="project" value="UniProtKB"/>
</dbReference>
<dbReference type="GO" id="GO:0045211">
    <property type="term" value="C:postsynaptic membrane"/>
    <property type="evidence" value="ECO:0000250"/>
    <property type="project" value="UniProtKB"/>
</dbReference>
<dbReference type="GO" id="GO:0005524">
    <property type="term" value="F:ATP binding"/>
    <property type="evidence" value="ECO:0007669"/>
    <property type="project" value="UniProtKB-KW"/>
</dbReference>
<dbReference type="GO" id="GO:0016887">
    <property type="term" value="F:ATP hydrolysis activity"/>
    <property type="evidence" value="ECO:0000250"/>
    <property type="project" value="UniProtKB"/>
</dbReference>
<dbReference type="GO" id="GO:0140567">
    <property type="term" value="F:membrane protein dislocase activity"/>
    <property type="evidence" value="ECO:0007669"/>
    <property type="project" value="RHEA"/>
</dbReference>
<dbReference type="GO" id="GO:0140570">
    <property type="term" value="P:extraction of mislocalized protein from mitochondrial outer membrane"/>
    <property type="evidence" value="ECO:0000250"/>
    <property type="project" value="UniProtKB"/>
</dbReference>
<dbReference type="GO" id="GO:0007612">
    <property type="term" value="P:learning"/>
    <property type="evidence" value="ECO:0000250"/>
    <property type="project" value="UniProtKB"/>
</dbReference>
<dbReference type="GO" id="GO:0007613">
    <property type="term" value="P:memory"/>
    <property type="evidence" value="ECO:0000250"/>
    <property type="project" value="UniProtKB"/>
</dbReference>
<dbReference type="GO" id="GO:0051967">
    <property type="term" value="P:negative regulation of synaptic transmission, glutamatergic"/>
    <property type="evidence" value="ECO:0000250"/>
    <property type="project" value="UniProtKB"/>
</dbReference>
<dbReference type="GO" id="GO:0002092">
    <property type="term" value="P:positive regulation of receptor internalization"/>
    <property type="evidence" value="ECO:0000250"/>
    <property type="project" value="UniProtKB"/>
</dbReference>
<dbReference type="CDD" id="cd19520">
    <property type="entry name" value="RecA-like_ATAD1"/>
    <property type="match status" value="1"/>
</dbReference>
<dbReference type="FunFam" id="1.10.8.60:FF:000044">
    <property type="entry name" value="ATPase family AAA domain-containing protein 1"/>
    <property type="match status" value="1"/>
</dbReference>
<dbReference type="FunFam" id="3.40.50.300:FF:000538">
    <property type="entry name" value="ATPase family AAA domain-containing protein 1"/>
    <property type="match status" value="1"/>
</dbReference>
<dbReference type="Gene3D" id="1.10.8.60">
    <property type="match status" value="1"/>
</dbReference>
<dbReference type="Gene3D" id="3.40.50.300">
    <property type="entry name" value="P-loop containing nucleotide triphosphate hydrolases"/>
    <property type="match status" value="1"/>
</dbReference>
<dbReference type="InterPro" id="IPR003593">
    <property type="entry name" value="AAA+_ATPase"/>
</dbReference>
<dbReference type="InterPro" id="IPR041569">
    <property type="entry name" value="AAA_lid_3"/>
</dbReference>
<dbReference type="InterPro" id="IPR003959">
    <property type="entry name" value="ATPase_AAA_core"/>
</dbReference>
<dbReference type="InterPro" id="IPR003960">
    <property type="entry name" value="ATPase_AAA_CS"/>
</dbReference>
<dbReference type="InterPro" id="IPR051701">
    <property type="entry name" value="Mito_OM_Translocase_MSP1"/>
</dbReference>
<dbReference type="InterPro" id="IPR027417">
    <property type="entry name" value="P-loop_NTPase"/>
</dbReference>
<dbReference type="PANTHER" id="PTHR45644">
    <property type="entry name" value="AAA ATPASE, PUTATIVE (AFU_ORTHOLOGUE AFUA_2G12920)-RELATED-RELATED"/>
    <property type="match status" value="1"/>
</dbReference>
<dbReference type="PANTHER" id="PTHR45644:SF2">
    <property type="entry name" value="OUTER MITOCHONDRIAL TRANSMEMBRANE HELIX TRANSLOCASE"/>
    <property type="match status" value="1"/>
</dbReference>
<dbReference type="Pfam" id="PF00004">
    <property type="entry name" value="AAA"/>
    <property type="match status" value="1"/>
</dbReference>
<dbReference type="Pfam" id="PF17862">
    <property type="entry name" value="AAA_lid_3"/>
    <property type="match status" value="1"/>
</dbReference>
<dbReference type="SMART" id="SM00382">
    <property type="entry name" value="AAA"/>
    <property type="match status" value="1"/>
</dbReference>
<dbReference type="SUPFAM" id="SSF52540">
    <property type="entry name" value="P-loop containing nucleoside triphosphate hydrolases"/>
    <property type="match status" value="1"/>
</dbReference>
<dbReference type="PROSITE" id="PS00674">
    <property type="entry name" value="AAA"/>
    <property type="match status" value="1"/>
</dbReference>
<organism>
    <name type="scientific">Bos taurus</name>
    <name type="common">Bovine</name>
    <dbReference type="NCBI Taxonomy" id="9913"/>
    <lineage>
        <taxon>Eukaryota</taxon>
        <taxon>Metazoa</taxon>
        <taxon>Chordata</taxon>
        <taxon>Craniata</taxon>
        <taxon>Vertebrata</taxon>
        <taxon>Euteleostomi</taxon>
        <taxon>Mammalia</taxon>
        <taxon>Eutheria</taxon>
        <taxon>Laurasiatheria</taxon>
        <taxon>Artiodactyla</taxon>
        <taxon>Ruminantia</taxon>
        <taxon>Pecora</taxon>
        <taxon>Bovidae</taxon>
        <taxon>Bovinae</taxon>
        <taxon>Bos</taxon>
    </lineage>
</organism>
<protein>
    <recommendedName>
        <fullName evidence="5">Outer mitochondrial transmembrane helix translocase</fullName>
        <ecNumber evidence="1 2">7.4.2.-</ecNumber>
    </recommendedName>
    <alternativeName>
        <fullName>ATPase family AAA domain-containing protein 1</fullName>
    </alternativeName>
    <alternativeName>
        <fullName evidence="3">Thorase</fullName>
    </alternativeName>
</protein>
<accession>F6QV99</accession>
<accession>A7MB55</accession>
<comment type="function">
    <text evidence="1 2 3">Outer mitochondrial translocase required to remove mislocalized tail-anchored transmembrane proteins on mitochondria (By similarity). Specifically recognizes and binds tail-anchored transmembrane proteins: acts as a dislocase that mediates the ATP-dependent extraction of mistargeted tail-anchored transmembrane proteins from the mitochondrion outer membrane (By similarity). Also plays a critical role in regulating the surface expression of AMPA receptors (AMPAR), thereby regulating synaptic plasticity and learning and memory. Required for NMDA-stimulated AMPAR internalization and inhibition of GRIA1 and GRIA2 recycling back to the plasma membrane; these activities are ATPase-dependent (By similarity).</text>
</comment>
<comment type="catalytic activity">
    <reaction evidence="1 2">
        <text>[protein]-with a C-terminal TM segment(out) + ATP + H2O = [protein]-with a C-terminal TM segment(in) + ADP + phosphate + H(+)</text>
        <dbReference type="Rhea" id="RHEA:66168"/>
        <dbReference type="Rhea" id="RHEA-COMP:16963"/>
        <dbReference type="ChEBI" id="CHEBI:15377"/>
        <dbReference type="ChEBI" id="CHEBI:15378"/>
        <dbReference type="ChEBI" id="CHEBI:30616"/>
        <dbReference type="ChEBI" id="CHEBI:43474"/>
        <dbReference type="ChEBI" id="CHEBI:90782"/>
        <dbReference type="ChEBI" id="CHEBI:456216"/>
    </reaction>
</comment>
<comment type="subunit">
    <text evidence="3">Interacts with GRIA2 and GRIP1 in an ATP-dependent manner. ATAD1-catalyzed ATP hydrolysis disrupts not only its binding to GRIA2 and GRIP1, but also interaction between GRIP1 and GRIA2, leading to AMPAR complex disassembly.</text>
</comment>
<comment type="subcellular location">
    <subcellularLocation>
        <location evidence="2">Mitochondrion outer membrane</location>
        <topology evidence="4">Single-pass membrane protein</topology>
    </subcellularLocation>
    <subcellularLocation>
        <location evidence="2">Peroxisome membrane</location>
        <topology evidence="4">Single-pass membrane protein</topology>
    </subcellularLocation>
    <subcellularLocation>
        <location evidence="3">Postsynaptic cell membrane</location>
        <topology evidence="4">Single-pass membrane protein</topology>
    </subcellularLocation>
</comment>
<comment type="similarity">
    <text evidence="5">Belongs to the AAA ATPase family. MSP1 subfamily.</text>
</comment>
<comment type="sequence caution" evidence="5">
    <conflict type="erroneous initiation">
        <sequence resource="EMBL-CDS" id="AAI51347"/>
    </conflict>
    <text>Extended N-terminus.</text>
</comment>
<name>ATAD1_BOVIN</name>